<proteinExistence type="evidence at protein level"/>
<keyword id="KW-0002">3D-structure</keyword>
<keyword id="KW-0121">Carboxypeptidase</keyword>
<keyword id="KW-0131">Cell cycle</keyword>
<keyword id="KW-0132">Cell division</keyword>
<keyword id="KW-0997">Cell inner membrane</keyword>
<keyword id="KW-1003">Cell membrane</keyword>
<keyword id="KW-0133">Cell shape</keyword>
<keyword id="KW-0961">Cell wall biogenesis/degradation</keyword>
<keyword id="KW-0903">Direct protein sequencing</keyword>
<keyword id="KW-0378">Hydrolase</keyword>
<keyword id="KW-0472">Membrane</keyword>
<keyword id="KW-0573">Peptidoglycan synthesis</keyword>
<keyword id="KW-0645">Protease</keyword>
<keyword id="KW-1185">Reference proteome</keyword>
<keyword id="KW-0717">Septation</keyword>
<keyword id="KW-0812">Transmembrane</keyword>
<keyword id="KW-1133">Transmembrane helix</keyword>
<sequence length="579" mass="62856">MKLNYFQGALYPWRFCVIVGLLLAMVGAIVWRIVDLHVIDHDFLKGQGDARSVRHIAIPAHRGLITDRNGEPLAVSTPVTTLWANPKELMTAKERWPQLAAALGQDTKLFADRIEQNAEREFIYLVRGLTPEQGEGVIALKVPGVYSIEEFRRFYPAGEVVAHAVGFTDVDDRGREGIELAFDEWLAGVPGKRQVLKDRRGRVIKDVQVTKNAKPGKTLALSIDLRLQYLAHRELRNALLENGAKAGSLVIMDVKTGEILAMTNQPTYNPNNRRNLQPAAMRNRAMIDVFEPGSTVKPFSMSAALASGRWKPSDIVDVYPGTLQIGRYTIRDVSRNSRQLDLTGILIKSSNVGISKIAFDIGAESIYSVMQQVGLGQDTGLGFPGERVGNLPNHRKWPKAETATLAYGYGLSVTAIQLAHAYAALANDGKSVPLSMTRVDRVPDGVQVISPEVASTVQGMLQQVVEAQGGVFRAQVPGYHAAGKSGTARKVSVGTKGYRENAYRSLFAGFAPATDPRIAMVVVIDEPSKAGYFGGLVSAPVFSKVMAGALRLMNVPPDNLPTATEQQQVNAAPAKGGRG</sequence>
<reference key="1">
    <citation type="journal article" date="2000" name="Nature">
        <title>Complete genome sequence of Pseudomonas aeruginosa PAO1, an opportunistic pathogen.</title>
        <authorList>
            <person name="Stover C.K."/>
            <person name="Pham X.-Q.T."/>
            <person name="Erwin A.L."/>
            <person name="Mizoguchi S.D."/>
            <person name="Warrener P."/>
            <person name="Hickey M.J."/>
            <person name="Brinkman F.S.L."/>
            <person name="Hufnagle W.O."/>
            <person name="Kowalik D.J."/>
            <person name="Lagrou M."/>
            <person name="Garber R.L."/>
            <person name="Goltry L."/>
            <person name="Tolentino E."/>
            <person name="Westbrock-Wadman S."/>
            <person name="Yuan Y."/>
            <person name="Brody L.L."/>
            <person name="Coulter S.N."/>
            <person name="Folger K.R."/>
            <person name="Kas A."/>
            <person name="Larbig K."/>
            <person name="Lim R.M."/>
            <person name="Smith K.A."/>
            <person name="Spencer D.H."/>
            <person name="Wong G.K.-S."/>
            <person name="Wu Z."/>
            <person name="Paulsen I.T."/>
            <person name="Reizer J."/>
            <person name="Saier M.H. Jr."/>
            <person name="Hancock R.E.W."/>
            <person name="Lory S."/>
            <person name="Olson M.V."/>
        </authorList>
    </citation>
    <scope>NUCLEOTIDE SEQUENCE [LARGE SCALE GENOMIC DNA]</scope>
    <source>
        <strain>ATCC 15692 / DSM 22644 / CIP 104116 / JCM 14847 / LMG 12228 / 1C / PRS 101 / PAO1</strain>
    </source>
</reference>
<reference key="2">
    <citation type="journal article" date="2010" name="Protein Expr. Purif.">
        <title>Production and purification of the penicillin-binding protein 3 from Pseudomonas aeruginosa.</title>
        <authorList>
            <person name="de Leon S.R."/>
            <person name="Daniels K."/>
            <person name="Clarke A.J."/>
        </authorList>
    </citation>
    <scope>PROTEIN SEQUENCE OF 29-39</scope>
    <scope>SUBCELLULAR LOCATION</scope>
    <scope>PENICILLIN-BINDING</scope>
    <source>
        <strain>ATCC 15692 / DSM 22644 / CIP 104116 / JCM 14847 / LMG 12228 / 1C / PRS 101 / PAO1</strain>
    </source>
</reference>
<reference key="3">
    <citation type="journal article" date="1997" name="J. Bacteriol.">
        <title>Identification of a penicillin-binding protein 3 homolog, PBP3x, in Pseudomonas aeruginosa: gene cloning and growth phase-dependent expression.</title>
        <authorList>
            <person name="Liao X."/>
            <person name="Hancock R.E.W."/>
        </authorList>
    </citation>
    <scope>INDUCTION</scope>
    <source>
        <strain>ATCC 15692 / DSM 22644 / CIP 104116 / JCM 14847 / LMG 12228 / 1C / PRS 101 / PAO1</strain>
    </source>
</reference>
<reference evidence="7 8 9 10 11 12" key="4">
    <citation type="journal article" date="2010" name="Proc. Natl. Acad. Sci. U.S.A.">
        <title>Structural basis for effectiveness of siderophore-conjugated monocarbams against clinically relevant strains of Pseudomonas aeruginosa.</title>
        <authorList>
            <person name="Han S."/>
            <person name="Zaniewski R.P."/>
            <person name="Marr E.S."/>
            <person name="Lacey B.M."/>
            <person name="Tomaras A.P."/>
            <person name="Evdokimov A."/>
            <person name="Miller J.R."/>
            <person name="Shanmugasundaram V."/>
        </authorList>
    </citation>
    <scope>X-RAY CRYSTALLOGRAPHY (1.64 ANGSTROMS) OF 50-579 OF APOPROTEIN AND IN COMPLEXES WITH CEFTAZIDIME; IMIPENEM; MEROPENEM; AZTREONAM AND MC-1</scope>
</reference>
<reference evidence="13 14 15" key="5">
    <citation type="journal article" date="2013" name="ACS Chem. Biol.">
        <title>Binding of (5S)-penicilloic acid to penicillin binding protein 3.</title>
        <authorList>
            <person name="van Berkel S.S."/>
            <person name="Nettleship J.E."/>
            <person name="Leung I.K."/>
            <person name="Brem J."/>
            <person name="Choi H."/>
            <person name="Stuart D.I."/>
            <person name="Claridge T.D."/>
            <person name="McDonough M.A."/>
            <person name="Owens R.J."/>
            <person name="Ren J."/>
            <person name="Schofield C.J."/>
        </authorList>
    </citation>
    <scope>X-RAY CRYSTALLOGRAPHY (2.01 ANGSTROMS) OF 35-579 IN COMPLEXES WITH PIPERACILLIN AND (5S)-PENICILLOIC ACID</scope>
</reference>
<name>FTSI_PSEAE</name>
<comment type="function">
    <text evidence="1 3">Catalyzes cross-linking of the peptidoglycan cell wall at the division septum (By similarity). Binds penicillin (PubMed:20580675).</text>
</comment>
<comment type="catalytic activity">
    <reaction evidence="1">
        <text>Preferential cleavage: (Ac)2-L-Lys-D-Ala-|-D-Ala. Also transpeptidation of peptidyl-alanyl moieties that are N-acyl substituents of D-alanine.</text>
        <dbReference type="EC" id="3.4.16.4"/>
    </reaction>
</comment>
<comment type="pathway">
    <text evidence="1">Cell wall biogenesis; peptidoglycan biosynthesis.</text>
</comment>
<comment type="subcellular location">
    <subcellularLocation>
        <location evidence="1 3">Cell inner membrane</location>
        <topology evidence="1">Single-pass membrane protein</topology>
    </subcellularLocation>
</comment>
<comment type="induction">
    <text evidence="4">Mainly produced during exponential phase of growth.</text>
</comment>
<comment type="similarity">
    <text evidence="1">Belongs to the transpeptidase family. FtsI subfamily.</text>
</comment>
<gene>
    <name evidence="5" type="primary">ftsI</name>
    <name type="synonym">pbpB</name>
    <name evidence="6" type="ordered locus">PA4418</name>
</gene>
<organism>
    <name type="scientific">Pseudomonas aeruginosa (strain ATCC 15692 / DSM 22644 / CIP 104116 / JCM 14847 / LMG 12228 / 1C / PRS 101 / PAO1)</name>
    <dbReference type="NCBI Taxonomy" id="208964"/>
    <lineage>
        <taxon>Bacteria</taxon>
        <taxon>Pseudomonadati</taxon>
        <taxon>Pseudomonadota</taxon>
        <taxon>Gammaproteobacteria</taxon>
        <taxon>Pseudomonadales</taxon>
        <taxon>Pseudomonadaceae</taxon>
        <taxon>Pseudomonas</taxon>
    </lineage>
</organism>
<evidence type="ECO:0000255" key="1">
    <source>
        <dbReference type="HAMAP-Rule" id="MF_02080"/>
    </source>
</evidence>
<evidence type="ECO:0000256" key="2">
    <source>
        <dbReference type="SAM" id="MobiDB-lite"/>
    </source>
</evidence>
<evidence type="ECO:0000269" key="3">
    <source>
    </source>
</evidence>
<evidence type="ECO:0000269" key="4">
    <source>
    </source>
</evidence>
<evidence type="ECO:0000303" key="5">
    <source>
    </source>
</evidence>
<evidence type="ECO:0000312" key="6">
    <source>
        <dbReference type="EMBL" id="AAG07806.1"/>
    </source>
</evidence>
<evidence type="ECO:0007744" key="7">
    <source>
        <dbReference type="PDB" id="3PBN"/>
    </source>
</evidence>
<evidence type="ECO:0007744" key="8">
    <source>
        <dbReference type="PDB" id="3PBO"/>
    </source>
</evidence>
<evidence type="ECO:0007744" key="9">
    <source>
        <dbReference type="PDB" id="3PBQ"/>
    </source>
</evidence>
<evidence type="ECO:0007744" key="10">
    <source>
        <dbReference type="PDB" id="3PBR"/>
    </source>
</evidence>
<evidence type="ECO:0007744" key="11">
    <source>
        <dbReference type="PDB" id="3PBS"/>
    </source>
</evidence>
<evidence type="ECO:0007744" key="12">
    <source>
        <dbReference type="PDB" id="3PBT"/>
    </source>
</evidence>
<evidence type="ECO:0007744" key="13">
    <source>
        <dbReference type="PDB" id="4KQO"/>
    </source>
</evidence>
<evidence type="ECO:0007744" key="14">
    <source>
        <dbReference type="PDB" id="4KQQ"/>
    </source>
</evidence>
<evidence type="ECO:0007744" key="15">
    <source>
        <dbReference type="PDB" id="4KQR"/>
    </source>
</evidence>
<evidence type="ECO:0007829" key="16">
    <source>
        <dbReference type="PDB" id="3PBO"/>
    </source>
</evidence>
<evidence type="ECO:0007829" key="17">
    <source>
        <dbReference type="PDB" id="4KQR"/>
    </source>
</evidence>
<evidence type="ECO:0007829" key="18">
    <source>
        <dbReference type="PDB" id="6HR4"/>
    </source>
</evidence>
<evidence type="ECO:0007829" key="19">
    <source>
        <dbReference type="PDB" id="6I1E"/>
    </source>
</evidence>
<evidence type="ECO:0007829" key="20">
    <source>
        <dbReference type="PDB" id="6R42"/>
    </source>
</evidence>
<evidence type="ECO:0007829" key="21">
    <source>
        <dbReference type="PDB" id="6Y6U"/>
    </source>
</evidence>
<evidence type="ECO:0007829" key="22">
    <source>
        <dbReference type="PDB" id="7ATM"/>
    </source>
</evidence>
<evidence type="ECO:0007829" key="23">
    <source>
        <dbReference type="PDB" id="7AU1"/>
    </source>
</evidence>
<evidence type="ECO:0007829" key="24">
    <source>
        <dbReference type="PDB" id="7KIW"/>
    </source>
</evidence>
<evidence type="ECO:0007829" key="25">
    <source>
        <dbReference type="PDB" id="7ONX"/>
    </source>
</evidence>
<evidence type="ECO:0007829" key="26">
    <source>
        <dbReference type="PDB" id="7ONZ"/>
    </source>
</evidence>
<evidence type="ECO:0007829" key="27">
    <source>
        <dbReference type="PDB" id="8P1U"/>
    </source>
</evidence>
<evidence type="ECO:0007829" key="28">
    <source>
        <dbReference type="PDB" id="9FZE"/>
    </source>
</evidence>
<dbReference type="EC" id="3.4.16.4" evidence="1"/>
<dbReference type="EMBL" id="AE004091">
    <property type="protein sequence ID" value="AAG07806.1"/>
    <property type="molecule type" value="Genomic_DNA"/>
</dbReference>
<dbReference type="PIR" id="S54872">
    <property type="entry name" value="S54872"/>
</dbReference>
<dbReference type="RefSeq" id="NP_253108.1">
    <property type="nucleotide sequence ID" value="NC_002516.2"/>
</dbReference>
<dbReference type="RefSeq" id="WP_003094139.1">
    <property type="nucleotide sequence ID" value="NZ_QZGE01000004.1"/>
</dbReference>
<dbReference type="PDB" id="3PBN">
    <property type="method" value="X-ray"/>
    <property type="resolution" value="2.00 A"/>
    <property type="chains" value="A=50-579"/>
</dbReference>
<dbReference type="PDB" id="3PBO">
    <property type="method" value="X-ray"/>
    <property type="resolution" value="1.74 A"/>
    <property type="chains" value="A=50-579"/>
</dbReference>
<dbReference type="PDB" id="3PBQ">
    <property type="method" value="X-ray"/>
    <property type="resolution" value="1.70 A"/>
    <property type="chains" value="A=50-579"/>
</dbReference>
<dbReference type="PDB" id="3PBR">
    <property type="method" value="X-ray"/>
    <property type="resolution" value="1.95 A"/>
    <property type="chains" value="A=50-579"/>
</dbReference>
<dbReference type="PDB" id="3PBS">
    <property type="method" value="X-ray"/>
    <property type="resolution" value="2.00 A"/>
    <property type="chains" value="A=50-579"/>
</dbReference>
<dbReference type="PDB" id="3PBT">
    <property type="method" value="X-ray"/>
    <property type="resolution" value="1.64 A"/>
    <property type="chains" value="A=50-579"/>
</dbReference>
<dbReference type="PDB" id="4KQO">
    <property type="method" value="X-ray"/>
    <property type="resolution" value="2.31 A"/>
    <property type="chains" value="A/B=35-579"/>
</dbReference>
<dbReference type="PDB" id="4KQQ">
    <property type="method" value="X-ray"/>
    <property type="resolution" value="2.10 A"/>
    <property type="chains" value="A/B=35-579"/>
</dbReference>
<dbReference type="PDB" id="4KQR">
    <property type="method" value="X-ray"/>
    <property type="resolution" value="2.01 A"/>
    <property type="chains" value="A/B=35-579"/>
</dbReference>
<dbReference type="PDB" id="6HR4">
    <property type="method" value="X-ray"/>
    <property type="resolution" value="1.19 A"/>
    <property type="chains" value="A=50-579"/>
</dbReference>
<dbReference type="PDB" id="6HR6">
    <property type="method" value="X-ray"/>
    <property type="resolution" value="2.53 A"/>
    <property type="chains" value="A=47-579"/>
</dbReference>
<dbReference type="PDB" id="6HR9">
    <property type="method" value="X-ray"/>
    <property type="resolution" value="1.99 A"/>
    <property type="chains" value="A=50-579"/>
</dbReference>
<dbReference type="PDB" id="6HZR">
    <property type="method" value="X-ray"/>
    <property type="resolution" value="1.19 A"/>
    <property type="chains" value="A=50-579"/>
</dbReference>
<dbReference type="PDB" id="6I1E">
    <property type="method" value="X-ray"/>
    <property type="resolution" value="1.64 A"/>
    <property type="chains" value="A=50-579"/>
</dbReference>
<dbReference type="PDB" id="6R3X">
    <property type="method" value="X-ray"/>
    <property type="resolution" value="1.59 A"/>
    <property type="chains" value="A=50-563"/>
</dbReference>
<dbReference type="PDB" id="6R40">
    <property type="method" value="X-ray"/>
    <property type="resolution" value="2.20 A"/>
    <property type="chains" value="A=50-579"/>
</dbReference>
<dbReference type="PDB" id="6R42">
    <property type="method" value="X-ray"/>
    <property type="resolution" value="1.72 A"/>
    <property type="chains" value="A=50-579"/>
</dbReference>
<dbReference type="PDB" id="6UN1">
    <property type="method" value="X-ray"/>
    <property type="resolution" value="2.26 A"/>
    <property type="chains" value="A=50-579"/>
</dbReference>
<dbReference type="PDB" id="6UN3">
    <property type="method" value="X-ray"/>
    <property type="resolution" value="1.90 A"/>
    <property type="chains" value="A=50-579"/>
</dbReference>
<dbReference type="PDB" id="6VJE">
    <property type="method" value="X-ray"/>
    <property type="resolution" value="1.76 A"/>
    <property type="chains" value="A=50-579"/>
</dbReference>
<dbReference type="PDB" id="6VOT">
    <property type="method" value="X-ray"/>
    <property type="resolution" value="2.40 A"/>
    <property type="chains" value="A=50-579"/>
</dbReference>
<dbReference type="PDB" id="6Y6U">
    <property type="method" value="X-ray"/>
    <property type="resolution" value="1.55 A"/>
    <property type="chains" value="A=50-563"/>
</dbReference>
<dbReference type="PDB" id="6Y6Z">
    <property type="method" value="X-ray"/>
    <property type="resolution" value="1.70 A"/>
    <property type="chains" value="A=50-563"/>
</dbReference>
<dbReference type="PDB" id="7ATM">
    <property type="method" value="X-ray"/>
    <property type="resolution" value="1.58 A"/>
    <property type="chains" value="A=50-579"/>
</dbReference>
<dbReference type="PDB" id="7ATO">
    <property type="method" value="X-ray"/>
    <property type="resolution" value="1.59 A"/>
    <property type="chains" value="A=50-579"/>
</dbReference>
<dbReference type="PDB" id="7ATW">
    <property type="method" value="X-ray"/>
    <property type="resolution" value="1.44 A"/>
    <property type="chains" value="A=50-579"/>
</dbReference>
<dbReference type="PDB" id="7ATX">
    <property type="method" value="X-ray"/>
    <property type="resolution" value="1.79 A"/>
    <property type="chains" value="A=50-579"/>
</dbReference>
<dbReference type="PDB" id="7AU0">
    <property type="method" value="X-ray"/>
    <property type="resolution" value="2.17 A"/>
    <property type="chains" value="A=50-579"/>
</dbReference>
<dbReference type="PDB" id="7AU1">
    <property type="method" value="X-ray"/>
    <property type="resolution" value="1.36 A"/>
    <property type="chains" value="A=50-579"/>
</dbReference>
<dbReference type="PDB" id="7AU8">
    <property type="method" value="X-ray"/>
    <property type="resolution" value="1.79 A"/>
    <property type="chains" value="A=50-579"/>
</dbReference>
<dbReference type="PDB" id="7AU9">
    <property type="method" value="X-ray"/>
    <property type="resolution" value="2.14 A"/>
    <property type="chains" value="A=50-579"/>
</dbReference>
<dbReference type="PDB" id="7AUB">
    <property type="method" value="X-ray"/>
    <property type="resolution" value="1.91 A"/>
    <property type="chains" value="A=50-579"/>
</dbReference>
<dbReference type="PDB" id="7AUH">
    <property type="method" value="X-ray"/>
    <property type="resolution" value="2.01 A"/>
    <property type="chains" value="A=50-579"/>
</dbReference>
<dbReference type="PDB" id="7JWL">
    <property type="method" value="X-ray"/>
    <property type="resolution" value="2.20 A"/>
    <property type="chains" value="A=50-579"/>
</dbReference>
<dbReference type="PDB" id="7KIT">
    <property type="method" value="X-ray"/>
    <property type="resolution" value="2.09 A"/>
    <property type="chains" value="A=1-579"/>
</dbReference>
<dbReference type="PDB" id="7KIV">
    <property type="method" value="X-ray"/>
    <property type="resolution" value="2.39 A"/>
    <property type="chains" value="A=1-579"/>
</dbReference>
<dbReference type="PDB" id="7KIW">
    <property type="method" value="X-ray"/>
    <property type="resolution" value="2.49 A"/>
    <property type="chains" value="A=1-579"/>
</dbReference>
<dbReference type="PDB" id="7LC4">
    <property type="method" value="X-ray"/>
    <property type="resolution" value="2.00 A"/>
    <property type="chains" value="A=50-579"/>
</dbReference>
<dbReference type="PDB" id="7LY1">
    <property type="method" value="X-ray"/>
    <property type="resolution" value="2.20 A"/>
    <property type="chains" value="A=50-579"/>
</dbReference>
<dbReference type="PDB" id="7ONK">
    <property type="method" value="X-ray"/>
    <property type="resolution" value="1.73 A"/>
    <property type="chains" value="A/B=39-563"/>
</dbReference>
<dbReference type="PDB" id="7ONX">
    <property type="method" value="X-ray"/>
    <property type="resolution" value="2.16 A"/>
    <property type="chains" value="A=39-563"/>
</dbReference>
<dbReference type="PDB" id="7ONY">
    <property type="method" value="X-ray"/>
    <property type="resolution" value="1.77 A"/>
    <property type="chains" value="A=39-563"/>
</dbReference>
<dbReference type="PDB" id="7ONZ">
    <property type="method" value="X-ray"/>
    <property type="resolution" value="1.86 A"/>
    <property type="chains" value="A=39-563"/>
</dbReference>
<dbReference type="PDB" id="8BH1">
    <property type="method" value="EM"/>
    <property type="resolution" value="3.80 A"/>
    <property type="chains" value="B=1-579"/>
</dbReference>
<dbReference type="PDB" id="8P1U">
    <property type="method" value="EM"/>
    <property type="resolution" value="3.30 A"/>
    <property type="chains" value="B=1-579"/>
</dbReference>
<dbReference type="PDB" id="9FZ7">
    <property type="method" value="X-ray"/>
    <property type="resolution" value="1.80 A"/>
    <property type="chains" value="A=52-562"/>
</dbReference>
<dbReference type="PDB" id="9FZ8">
    <property type="method" value="X-ray"/>
    <property type="resolution" value="2.11 A"/>
    <property type="chains" value="A=52-562"/>
</dbReference>
<dbReference type="PDB" id="9FZE">
    <property type="method" value="X-ray"/>
    <property type="resolution" value="2.10 A"/>
    <property type="chains" value="A=52-562"/>
</dbReference>
<dbReference type="PDB" id="9FZO">
    <property type="method" value="X-ray"/>
    <property type="resolution" value="1.80 A"/>
    <property type="chains" value="A=52-562"/>
</dbReference>
<dbReference type="PDB" id="9FZP">
    <property type="method" value="X-ray"/>
    <property type="resolution" value="2.70 A"/>
    <property type="chains" value="A=52-562"/>
</dbReference>
<dbReference type="PDBsum" id="3PBN"/>
<dbReference type="PDBsum" id="3PBO"/>
<dbReference type="PDBsum" id="3PBQ"/>
<dbReference type="PDBsum" id="3PBR"/>
<dbReference type="PDBsum" id="3PBS"/>
<dbReference type="PDBsum" id="3PBT"/>
<dbReference type="PDBsum" id="4KQO"/>
<dbReference type="PDBsum" id="4KQQ"/>
<dbReference type="PDBsum" id="4KQR"/>
<dbReference type="PDBsum" id="6HR4"/>
<dbReference type="PDBsum" id="6HR6"/>
<dbReference type="PDBsum" id="6HR9"/>
<dbReference type="PDBsum" id="6HZR"/>
<dbReference type="PDBsum" id="6I1E"/>
<dbReference type="PDBsum" id="6R3X"/>
<dbReference type="PDBsum" id="6R40"/>
<dbReference type="PDBsum" id="6R42"/>
<dbReference type="PDBsum" id="6UN1"/>
<dbReference type="PDBsum" id="6UN3"/>
<dbReference type="PDBsum" id="6VJE"/>
<dbReference type="PDBsum" id="6VOT"/>
<dbReference type="PDBsum" id="6Y6U"/>
<dbReference type="PDBsum" id="6Y6Z"/>
<dbReference type="PDBsum" id="7ATM"/>
<dbReference type="PDBsum" id="7ATO"/>
<dbReference type="PDBsum" id="7ATW"/>
<dbReference type="PDBsum" id="7ATX"/>
<dbReference type="PDBsum" id="7AU0"/>
<dbReference type="PDBsum" id="7AU1"/>
<dbReference type="PDBsum" id="7AU8"/>
<dbReference type="PDBsum" id="7AU9"/>
<dbReference type="PDBsum" id="7AUB"/>
<dbReference type="PDBsum" id="7AUH"/>
<dbReference type="PDBsum" id="7JWL"/>
<dbReference type="PDBsum" id="7KIT"/>
<dbReference type="PDBsum" id="7KIV"/>
<dbReference type="PDBsum" id="7KIW"/>
<dbReference type="PDBsum" id="7LC4"/>
<dbReference type="PDBsum" id="7LY1"/>
<dbReference type="PDBsum" id="7ONK"/>
<dbReference type="PDBsum" id="7ONX"/>
<dbReference type="PDBsum" id="7ONY"/>
<dbReference type="PDBsum" id="7ONZ"/>
<dbReference type="PDBsum" id="8BH1"/>
<dbReference type="PDBsum" id="8P1U"/>
<dbReference type="PDBsum" id="9FZ7"/>
<dbReference type="PDBsum" id="9FZ8"/>
<dbReference type="PDBsum" id="9FZE"/>
<dbReference type="PDBsum" id="9FZO"/>
<dbReference type="PDBsum" id="9FZP"/>
<dbReference type="EMDB" id="EMD-16042"/>
<dbReference type="EMDB" id="EMD-17356"/>
<dbReference type="SMR" id="G3XD46"/>
<dbReference type="FunCoup" id="G3XD46">
    <property type="interactions" value="242"/>
</dbReference>
<dbReference type="STRING" id="208964.PA4418"/>
<dbReference type="DrugCentral" id="G3XD46"/>
<dbReference type="PaxDb" id="208964-PA4418"/>
<dbReference type="GeneID" id="881247"/>
<dbReference type="KEGG" id="pae:PA4418"/>
<dbReference type="PATRIC" id="fig|208964.12.peg.4627"/>
<dbReference type="PseudoCAP" id="PA4418"/>
<dbReference type="HOGENOM" id="CLU_009289_6_2_6"/>
<dbReference type="InParanoid" id="G3XD46"/>
<dbReference type="OrthoDB" id="9789078at2"/>
<dbReference type="PhylomeDB" id="G3XD46"/>
<dbReference type="BRENDA" id="2.4.1.129">
    <property type="organism ID" value="5087"/>
</dbReference>
<dbReference type="UniPathway" id="UPA00219"/>
<dbReference type="EvolutionaryTrace" id="G3XD46"/>
<dbReference type="Proteomes" id="UP000002438">
    <property type="component" value="Chromosome"/>
</dbReference>
<dbReference type="GO" id="GO:0005886">
    <property type="term" value="C:plasma membrane"/>
    <property type="evidence" value="ECO:0000318"/>
    <property type="project" value="GO_Central"/>
</dbReference>
<dbReference type="GO" id="GO:0008658">
    <property type="term" value="F:penicillin binding"/>
    <property type="evidence" value="ECO:0000318"/>
    <property type="project" value="GO_Central"/>
</dbReference>
<dbReference type="GO" id="GO:0008955">
    <property type="term" value="F:peptidoglycan glycosyltransferase activity"/>
    <property type="evidence" value="ECO:0007669"/>
    <property type="project" value="InterPro"/>
</dbReference>
<dbReference type="GO" id="GO:0009002">
    <property type="term" value="F:serine-type D-Ala-D-Ala carboxypeptidase activity"/>
    <property type="evidence" value="ECO:0007669"/>
    <property type="project" value="UniProtKB-UniRule"/>
</dbReference>
<dbReference type="GO" id="GO:0071555">
    <property type="term" value="P:cell wall organization"/>
    <property type="evidence" value="ECO:0000318"/>
    <property type="project" value="GO_Central"/>
</dbReference>
<dbReference type="GO" id="GO:0000917">
    <property type="term" value="P:division septum assembly"/>
    <property type="evidence" value="ECO:0007669"/>
    <property type="project" value="UniProtKB-KW"/>
</dbReference>
<dbReference type="GO" id="GO:0043093">
    <property type="term" value="P:FtsZ-dependent cytokinesis"/>
    <property type="evidence" value="ECO:0007669"/>
    <property type="project" value="UniProtKB-UniRule"/>
</dbReference>
<dbReference type="GO" id="GO:0009252">
    <property type="term" value="P:peptidoglycan biosynthetic process"/>
    <property type="evidence" value="ECO:0007669"/>
    <property type="project" value="UniProtKB-UniRule"/>
</dbReference>
<dbReference type="GO" id="GO:0006508">
    <property type="term" value="P:proteolysis"/>
    <property type="evidence" value="ECO:0007669"/>
    <property type="project" value="UniProtKB-KW"/>
</dbReference>
<dbReference type="GO" id="GO:0008360">
    <property type="term" value="P:regulation of cell shape"/>
    <property type="evidence" value="ECO:0007669"/>
    <property type="project" value="UniProtKB-KW"/>
</dbReference>
<dbReference type="FunFam" id="3.90.1310.10:FF:000003">
    <property type="entry name" value="Peptidoglycan D,D-transpeptidase FtsI"/>
    <property type="match status" value="1"/>
</dbReference>
<dbReference type="Gene3D" id="3.30.450.330">
    <property type="match status" value="1"/>
</dbReference>
<dbReference type="Gene3D" id="3.40.710.10">
    <property type="entry name" value="DD-peptidase/beta-lactamase superfamily"/>
    <property type="match status" value="1"/>
</dbReference>
<dbReference type="Gene3D" id="3.90.1310.10">
    <property type="entry name" value="Penicillin-binding protein 2a (Domain 2)"/>
    <property type="match status" value="1"/>
</dbReference>
<dbReference type="HAMAP" id="MF_02080">
    <property type="entry name" value="FtsI_transpept"/>
    <property type="match status" value="1"/>
</dbReference>
<dbReference type="InterPro" id="IPR050515">
    <property type="entry name" value="Bact_Transpept/Beta-Lactamase"/>
</dbReference>
<dbReference type="InterPro" id="IPR012338">
    <property type="entry name" value="Beta-lactam/transpept-like"/>
</dbReference>
<dbReference type="InterPro" id="IPR037532">
    <property type="entry name" value="FtsI_transpept"/>
</dbReference>
<dbReference type="InterPro" id="IPR005311">
    <property type="entry name" value="PBP_dimer"/>
</dbReference>
<dbReference type="InterPro" id="IPR036138">
    <property type="entry name" value="PBP_dimer_sf"/>
</dbReference>
<dbReference type="InterPro" id="IPR001460">
    <property type="entry name" value="PCN-bd_Tpept"/>
</dbReference>
<dbReference type="PANTHER" id="PTHR30627">
    <property type="entry name" value="PEPTIDOGLYCAN D,D-TRANSPEPTIDASE"/>
    <property type="match status" value="1"/>
</dbReference>
<dbReference type="PANTHER" id="PTHR30627:SF1">
    <property type="entry name" value="PEPTIDOGLYCAN D,D-TRANSPEPTIDASE FTSI"/>
    <property type="match status" value="1"/>
</dbReference>
<dbReference type="Pfam" id="PF03717">
    <property type="entry name" value="PBP_dimer"/>
    <property type="match status" value="1"/>
</dbReference>
<dbReference type="Pfam" id="PF00905">
    <property type="entry name" value="Transpeptidase"/>
    <property type="match status" value="1"/>
</dbReference>
<dbReference type="SUPFAM" id="SSF56601">
    <property type="entry name" value="beta-lactamase/transpeptidase-like"/>
    <property type="match status" value="1"/>
</dbReference>
<dbReference type="SUPFAM" id="SSF56519">
    <property type="entry name" value="Penicillin binding protein dimerisation domain"/>
    <property type="match status" value="1"/>
</dbReference>
<protein>
    <recommendedName>
        <fullName evidence="1">Peptidoglycan D,D-transpeptidase FtsI</fullName>
        <ecNumber evidence="1">3.4.16.4</ecNumber>
    </recommendedName>
    <alternativeName>
        <fullName evidence="5">Penicillin-binding protein 3</fullName>
        <shortName evidence="5">PBP-3</shortName>
    </alternativeName>
</protein>
<feature type="chain" id="PRO_0000438878" description="Peptidoglycan D,D-transpeptidase FtsI">
    <location>
        <begin position="1"/>
        <end position="579"/>
    </location>
</feature>
<feature type="transmembrane region" description="Helical" evidence="1">
    <location>
        <begin position="15"/>
        <end position="35"/>
    </location>
</feature>
<feature type="region of interest" description="Disordered" evidence="2">
    <location>
        <begin position="558"/>
        <end position="579"/>
    </location>
</feature>
<feature type="compositionally biased region" description="Polar residues" evidence="2">
    <location>
        <begin position="561"/>
        <end position="570"/>
    </location>
</feature>
<feature type="active site" description="Acyl-ester intermediate" evidence="1">
    <location>
        <position position="294"/>
    </location>
</feature>
<feature type="helix" evidence="27">
    <location>
        <begin position="12"/>
        <end position="37"/>
    </location>
</feature>
<feature type="strand" evidence="18">
    <location>
        <begin position="50"/>
        <end position="58"/>
    </location>
</feature>
<feature type="strand" evidence="26">
    <location>
        <begin position="68"/>
        <end position="70"/>
    </location>
</feature>
<feature type="strand" evidence="18">
    <location>
        <begin position="72"/>
        <end position="84"/>
    </location>
</feature>
<feature type="helix" evidence="18">
    <location>
        <begin position="86"/>
        <end position="89"/>
    </location>
</feature>
<feature type="helix" evidence="18">
    <location>
        <begin position="93"/>
        <end position="95"/>
    </location>
</feature>
<feature type="helix" evidence="18">
    <location>
        <begin position="96"/>
        <end position="103"/>
    </location>
</feature>
<feature type="helix" evidence="18">
    <location>
        <begin position="107"/>
        <end position="116"/>
    </location>
</feature>
<feature type="turn" evidence="18">
    <location>
        <begin position="117"/>
        <end position="119"/>
    </location>
</feature>
<feature type="strand" evidence="18">
    <location>
        <begin position="123"/>
        <end position="129"/>
    </location>
</feature>
<feature type="helix" evidence="18">
    <location>
        <begin position="131"/>
        <end position="138"/>
    </location>
</feature>
<feature type="strand" evidence="18">
    <location>
        <begin position="145"/>
        <end position="154"/>
    </location>
</feature>
<feature type="helix" evidence="18">
    <location>
        <begin position="158"/>
        <end position="161"/>
    </location>
</feature>
<feature type="helix" evidence="18">
    <location>
        <begin position="162"/>
        <end position="165"/>
    </location>
</feature>
<feature type="strand" evidence="22">
    <location>
        <begin position="174"/>
        <end position="176"/>
    </location>
</feature>
<feature type="helix" evidence="18">
    <location>
        <begin position="177"/>
        <end position="181"/>
    </location>
</feature>
<feature type="helix" evidence="18">
    <location>
        <begin position="183"/>
        <end position="187"/>
    </location>
</feature>
<feature type="strand" evidence="18">
    <location>
        <begin position="191"/>
        <end position="198"/>
    </location>
</feature>
<feature type="strand" evidence="18">
    <location>
        <begin position="203"/>
        <end position="211"/>
    </location>
</feature>
<feature type="strand" evidence="18">
    <location>
        <begin position="219"/>
        <end position="222"/>
    </location>
</feature>
<feature type="helix" evidence="18">
    <location>
        <begin position="225"/>
        <end position="241"/>
    </location>
</feature>
<feature type="strand" evidence="18">
    <location>
        <begin position="245"/>
        <end position="253"/>
    </location>
</feature>
<feature type="turn" evidence="18">
    <location>
        <begin position="254"/>
        <end position="256"/>
    </location>
</feature>
<feature type="strand" evidence="18">
    <location>
        <begin position="258"/>
        <end position="266"/>
    </location>
</feature>
<feature type="turn" evidence="28">
    <location>
        <begin position="270"/>
        <end position="272"/>
    </location>
</feature>
<feature type="helix" evidence="20">
    <location>
        <begin position="273"/>
        <end position="275"/>
    </location>
</feature>
<feature type="helix" evidence="18">
    <location>
        <begin position="278"/>
        <end position="281"/>
    </location>
</feature>
<feature type="helix" evidence="18">
    <location>
        <begin position="284"/>
        <end position="287"/>
    </location>
</feature>
<feature type="strand" evidence="23">
    <location>
        <begin position="289"/>
        <end position="291"/>
    </location>
</feature>
<feature type="helix" evidence="18">
    <location>
        <begin position="293"/>
        <end position="296"/>
    </location>
</feature>
<feature type="helix" evidence="18">
    <location>
        <begin position="297"/>
        <end position="306"/>
    </location>
</feature>
<feature type="strand" evidence="23">
    <location>
        <begin position="307"/>
        <end position="309"/>
    </location>
</feature>
<feature type="strand" evidence="18">
    <location>
        <begin position="315"/>
        <end position="317"/>
    </location>
</feature>
<feature type="strand" evidence="18">
    <location>
        <begin position="321"/>
        <end position="325"/>
    </location>
</feature>
<feature type="strand" evidence="18">
    <location>
        <begin position="328"/>
        <end position="331"/>
    </location>
</feature>
<feature type="strand" evidence="18">
    <location>
        <begin position="338"/>
        <end position="341"/>
    </location>
</feature>
<feature type="helix" evidence="18">
    <location>
        <begin position="342"/>
        <end position="347"/>
    </location>
</feature>
<feature type="helix" evidence="18">
    <location>
        <begin position="351"/>
        <end position="361"/>
    </location>
</feature>
<feature type="helix" evidence="18">
    <location>
        <begin position="363"/>
        <end position="373"/>
    </location>
</feature>
<feature type="turn" evidence="18">
    <location>
        <begin position="374"/>
        <end position="376"/>
    </location>
</feature>
<feature type="helix" evidence="18">
    <location>
        <begin position="399"/>
        <end position="406"/>
    </location>
</feature>
<feature type="turn" evidence="16">
    <location>
        <begin position="407"/>
        <end position="410"/>
    </location>
</feature>
<feature type="strand" evidence="26">
    <location>
        <begin position="412"/>
        <end position="414"/>
    </location>
</feature>
<feature type="helix" evidence="18">
    <location>
        <begin position="415"/>
        <end position="426"/>
    </location>
</feature>
<feature type="turn" evidence="18">
    <location>
        <begin position="427"/>
        <end position="429"/>
    </location>
</feature>
<feature type="strand" evidence="18">
    <location>
        <begin position="435"/>
        <end position="437"/>
    </location>
</feature>
<feature type="strand" evidence="24">
    <location>
        <begin position="446"/>
        <end position="449"/>
    </location>
</feature>
<feature type="helix" evidence="18">
    <location>
        <begin position="451"/>
        <end position="466"/>
    </location>
</feature>
<feature type="strand" evidence="27">
    <location>
        <begin position="467"/>
        <end position="470"/>
    </location>
</feature>
<feature type="helix" evidence="18">
    <location>
        <begin position="472"/>
        <end position="474"/>
    </location>
</feature>
<feature type="strand" evidence="18">
    <location>
        <begin position="482"/>
        <end position="488"/>
    </location>
</feature>
<feature type="strand" evidence="19">
    <location>
        <begin position="493"/>
        <end position="495"/>
    </location>
</feature>
<feature type="strand" evidence="18">
    <location>
        <begin position="504"/>
        <end position="512"/>
    </location>
</feature>
<feature type="strand" evidence="21">
    <location>
        <begin position="513"/>
        <end position="515"/>
    </location>
</feature>
<feature type="strand" evidence="18">
    <location>
        <begin position="518"/>
        <end position="526"/>
    </location>
</feature>
<feature type="strand" evidence="25">
    <location>
        <begin position="527"/>
        <end position="529"/>
    </location>
</feature>
<feature type="turn" evidence="23">
    <location>
        <begin position="534"/>
        <end position="537"/>
    </location>
</feature>
<feature type="helix" evidence="18">
    <location>
        <begin position="539"/>
        <end position="552"/>
    </location>
</feature>
<feature type="helix" evidence="17">
    <location>
        <begin position="560"/>
        <end position="562"/>
    </location>
</feature>
<feature type="turn" evidence="17">
    <location>
        <begin position="565"/>
        <end position="569"/>
    </location>
</feature>
<accession>G3XD46</accession>